<name>RL4_BRUAB</name>
<feature type="chain" id="PRO_0000242349" description="Large ribosomal subunit protein uL4">
    <location>
        <begin position="1"/>
        <end position="206"/>
    </location>
</feature>
<feature type="region of interest" description="Disordered" evidence="2">
    <location>
        <begin position="42"/>
        <end position="94"/>
    </location>
</feature>
<feature type="compositionally biased region" description="Basic residues" evidence="2">
    <location>
        <begin position="64"/>
        <end position="77"/>
    </location>
</feature>
<proteinExistence type="inferred from homology"/>
<dbReference type="EMBL" id="AE017223">
    <property type="protein sequence ID" value="AAX74575.1"/>
    <property type="molecule type" value="Genomic_DNA"/>
</dbReference>
<dbReference type="RefSeq" id="WP_002964361.1">
    <property type="nucleotide sequence ID" value="NC_006932.1"/>
</dbReference>
<dbReference type="SMR" id="Q57CQ9"/>
<dbReference type="EnsemblBacteria" id="AAX74575">
    <property type="protein sequence ID" value="AAX74575"/>
    <property type="gene ID" value="BruAb1_1237"/>
</dbReference>
<dbReference type="GeneID" id="93016440"/>
<dbReference type="KEGG" id="bmb:BruAb1_1237"/>
<dbReference type="HOGENOM" id="CLU_041575_5_1_5"/>
<dbReference type="Proteomes" id="UP000000540">
    <property type="component" value="Chromosome I"/>
</dbReference>
<dbReference type="GO" id="GO:1990904">
    <property type="term" value="C:ribonucleoprotein complex"/>
    <property type="evidence" value="ECO:0007669"/>
    <property type="project" value="UniProtKB-KW"/>
</dbReference>
<dbReference type="GO" id="GO:0005840">
    <property type="term" value="C:ribosome"/>
    <property type="evidence" value="ECO:0007669"/>
    <property type="project" value="UniProtKB-KW"/>
</dbReference>
<dbReference type="GO" id="GO:0019843">
    <property type="term" value="F:rRNA binding"/>
    <property type="evidence" value="ECO:0007669"/>
    <property type="project" value="UniProtKB-UniRule"/>
</dbReference>
<dbReference type="GO" id="GO:0003735">
    <property type="term" value="F:structural constituent of ribosome"/>
    <property type="evidence" value="ECO:0007669"/>
    <property type="project" value="InterPro"/>
</dbReference>
<dbReference type="GO" id="GO:0006412">
    <property type="term" value="P:translation"/>
    <property type="evidence" value="ECO:0007669"/>
    <property type="project" value="UniProtKB-UniRule"/>
</dbReference>
<dbReference type="Gene3D" id="3.40.1370.10">
    <property type="match status" value="1"/>
</dbReference>
<dbReference type="HAMAP" id="MF_01328_B">
    <property type="entry name" value="Ribosomal_uL4_B"/>
    <property type="match status" value="1"/>
</dbReference>
<dbReference type="InterPro" id="IPR002136">
    <property type="entry name" value="Ribosomal_uL4"/>
</dbReference>
<dbReference type="InterPro" id="IPR013005">
    <property type="entry name" value="Ribosomal_uL4-like"/>
</dbReference>
<dbReference type="InterPro" id="IPR023574">
    <property type="entry name" value="Ribosomal_uL4_dom_sf"/>
</dbReference>
<dbReference type="NCBIfam" id="TIGR03953">
    <property type="entry name" value="rplD_bact"/>
    <property type="match status" value="1"/>
</dbReference>
<dbReference type="PANTHER" id="PTHR10746">
    <property type="entry name" value="50S RIBOSOMAL PROTEIN L4"/>
    <property type="match status" value="1"/>
</dbReference>
<dbReference type="PANTHER" id="PTHR10746:SF6">
    <property type="entry name" value="LARGE RIBOSOMAL SUBUNIT PROTEIN UL4M"/>
    <property type="match status" value="1"/>
</dbReference>
<dbReference type="Pfam" id="PF00573">
    <property type="entry name" value="Ribosomal_L4"/>
    <property type="match status" value="1"/>
</dbReference>
<dbReference type="SUPFAM" id="SSF52166">
    <property type="entry name" value="Ribosomal protein L4"/>
    <property type="match status" value="1"/>
</dbReference>
<accession>Q57CQ9</accession>
<organism>
    <name type="scientific">Brucella abortus biovar 1 (strain 9-941)</name>
    <dbReference type="NCBI Taxonomy" id="262698"/>
    <lineage>
        <taxon>Bacteria</taxon>
        <taxon>Pseudomonadati</taxon>
        <taxon>Pseudomonadota</taxon>
        <taxon>Alphaproteobacteria</taxon>
        <taxon>Hyphomicrobiales</taxon>
        <taxon>Brucellaceae</taxon>
        <taxon>Brucella/Ochrobactrum group</taxon>
        <taxon>Brucella</taxon>
    </lineage>
</organism>
<gene>
    <name evidence="1" type="primary">rplD</name>
    <name type="ordered locus">BruAb1_1237</name>
</gene>
<keyword id="KW-0687">Ribonucleoprotein</keyword>
<keyword id="KW-0689">Ribosomal protein</keyword>
<keyword id="KW-0694">RNA-binding</keyword>
<keyword id="KW-0699">rRNA-binding</keyword>
<evidence type="ECO:0000255" key="1">
    <source>
        <dbReference type="HAMAP-Rule" id="MF_01328"/>
    </source>
</evidence>
<evidence type="ECO:0000256" key="2">
    <source>
        <dbReference type="SAM" id="MobiDB-lite"/>
    </source>
</evidence>
<evidence type="ECO:0000305" key="3"/>
<comment type="function">
    <text evidence="1">One of the primary rRNA binding proteins, this protein initially binds near the 5'-end of the 23S rRNA. It is important during the early stages of 50S assembly. It makes multiple contacts with different domains of the 23S rRNA in the assembled 50S subunit and ribosome.</text>
</comment>
<comment type="function">
    <text evidence="1">Forms part of the polypeptide exit tunnel.</text>
</comment>
<comment type="subunit">
    <text evidence="1">Part of the 50S ribosomal subunit.</text>
</comment>
<comment type="similarity">
    <text evidence="1">Belongs to the universal ribosomal protein uL4 family.</text>
</comment>
<reference key="1">
    <citation type="journal article" date="2005" name="J. Bacteriol.">
        <title>Completion of the genome sequence of Brucella abortus and comparison to the highly similar genomes of Brucella melitensis and Brucella suis.</title>
        <authorList>
            <person name="Halling S.M."/>
            <person name="Peterson-Burch B.D."/>
            <person name="Bricker B.J."/>
            <person name="Zuerner R.L."/>
            <person name="Qing Z."/>
            <person name="Li L.-L."/>
            <person name="Kapur V."/>
            <person name="Alt D.P."/>
            <person name="Olsen S.C."/>
        </authorList>
    </citation>
    <scope>NUCLEOTIDE SEQUENCE [LARGE SCALE GENOMIC DNA]</scope>
    <source>
        <strain>9-941</strain>
    </source>
</reference>
<sequence>MDLTITTLEGKDAGKVKLNEEIFGLDPRDDILQRVVRWQLARRQQGSHKAQGRGDVSRTGSKMYKQKGTGRARHHSARAPQFRGGGQAHGPVVRNHDHDLPKKVRALGLRHALSAKAKASDLIIIDDLASADAKTKQLVSQFAKLGLENALLIGGAEIDANFQRAASNIPNIDVLPVQGINVYDILRRGKLVLSKAAVEALEERFK</sequence>
<protein>
    <recommendedName>
        <fullName evidence="1">Large ribosomal subunit protein uL4</fullName>
    </recommendedName>
    <alternativeName>
        <fullName evidence="3">50S ribosomal protein L4</fullName>
    </alternativeName>
</protein>